<proteinExistence type="evidence at protein level"/>
<protein>
    <recommendedName>
        <fullName evidence="4">Small ribosomal subunit protein uS17</fullName>
    </recommendedName>
    <alternativeName>
        <fullName>40S ribosomal protein S11</fullName>
    </alternativeName>
</protein>
<name>RS11_MOUSE</name>
<organism>
    <name type="scientific">Mus musculus</name>
    <name type="common">Mouse</name>
    <dbReference type="NCBI Taxonomy" id="10090"/>
    <lineage>
        <taxon>Eukaryota</taxon>
        <taxon>Metazoa</taxon>
        <taxon>Chordata</taxon>
        <taxon>Craniata</taxon>
        <taxon>Vertebrata</taxon>
        <taxon>Euteleostomi</taxon>
        <taxon>Mammalia</taxon>
        <taxon>Eutheria</taxon>
        <taxon>Euarchontoglires</taxon>
        <taxon>Glires</taxon>
        <taxon>Rodentia</taxon>
        <taxon>Myomorpha</taxon>
        <taxon>Muroidea</taxon>
        <taxon>Muridae</taxon>
        <taxon>Murinae</taxon>
        <taxon>Mus</taxon>
        <taxon>Mus</taxon>
    </lineage>
</organism>
<comment type="function">
    <text evidence="1 3">Component of the small ribosomal subunit (PubMed:36517592). The ribosome is a large ribonucleoprotein complex responsible for the synthesis of proteins in the cell (PubMed:36517592). Part of the small subunit (SSU) processome, first precursor of the small eukaryotic ribosomal subunit. During the assembly of the SSU processome in the nucleolus, many ribosome biogenesis factors, an RNA chaperone and ribosomal proteins associate with the nascent pre-rRNA and work in concert to generate RNA folding, modifications, rearrangements and cleavage as well as targeted degradation of pre-ribosomal RNA by the RNA exosome (By similarity).</text>
</comment>
<comment type="subunit">
    <text evidence="1 3">Component of the small ribosomal subunit (PubMed:36517592). Part of the small subunit (SSU) processome, composed of more than 70 proteins and the RNA chaperone small nucleolar RNA (snoRNA) U3 (By similarity).</text>
</comment>
<comment type="subcellular location">
    <subcellularLocation>
        <location evidence="3">Cytoplasm</location>
    </subcellularLocation>
    <subcellularLocation>
        <location evidence="1">Nucleus</location>
        <location evidence="1">Nucleolus</location>
    </subcellularLocation>
</comment>
<comment type="PTM">
    <text evidence="2">Citrullinated by PADI4.</text>
</comment>
<comment type="similarity">
    <text evidence="4">Belongs to the universal ribosomal protein uS17 family.</text>
</comment>
<gene>
    <name type="primary">Rps11</name>
</gene>
<dbReference type="EMBL" id="U93864">
    <property type="protein sequence ID" value="AAB52256.1"/>
    <property type="molecule type" value="mRNA"/>
</dbReference>
<dbReference type="EMBL" id="AB028894">
    <property type="protein sequence ID" value="BAA88216.1"/>
    <property type="molecule type" value="Genomic_DNA"/>
</dbReference>
<dbReference type="EMBL" id="BC012641">
    <property type="protein sequence ID" value="AAH12641.1"/>
    <property type="molecule type" value="mRNA"/>
</dbReference>
<dbReference type="CCDS" id="CCDS39947.1"/>
<dbReference type="RefSeq" id="NP_038753.1">
    <property type="nucleotide sequence ID" value="NM_013725.4"/>
</dbReference>
<dbReference type="PDB" id="7CPU">
    <property type="method" value="EM"/>
    <property type="resolution" value="2.82 A"/>
    <property type="chains" value="SL=1-158"/>
</dbReference>
<dbReference type="PDB" id="7CPV">
    <property type="method" value="EM"/>
    <property type="resolution" value="3.03 A"/>
    <property type="chains" value="SL=1-158"/>
</dbReference>
<dbReference type="PDB" id="7LS1">
    <property type="method" value="EM"/>
    <property type="resolution" value="3.30 A"/>
    <property type="chains" value="w2=1-158"/>
</dbReference>
<dbReference type="PDB" id="7LS2">
    <property type="method" value="EM"/>
    <property type="resolution" value="3.10 A"/>
    <property type="chains" value="w2=1-158"/>
</dbReference>
<dbReference type="PDBsum" id="7CPU"/>
<dbReference type="PDBsum" id="7CPV"/>
<dbReference type="PDBsum" id="7LS1"/>
<dbReference type="PDBsum" id="7LS2"/>
<dbReference type="EMDB" id="EMD-23500"/>
<dbReference type="EMDB" id="EMD-23501"/>
<dbReference type="EMDB" id="EMD-30432"/>
<dbReference type="EMDB" id="EMD-30433"/>
<dbReference type="SMR" id="P62281"/>
<dbReference type="BioGRID" id="205129">
    <property type="interactions" value="98"/>
</dbReference>
<dbReference type="ComplexPortal" id="CPX-5261">
    <property type="entry name" value="40S cytosolic small ribosomal subunit"/>
</dbReference>
<dbReference type="DIP" id="DIP-59975N"/>
<dbReference type="FunCoup" id="P62281">
    <property type="interactions" value="2189"/>
</dbReference>
<dbReference type="IntAct" id="P62281">
    <property type="interactions" value="3"/>
</dbReference>
<dbReference type="MINT" id="P62281"/>
<dbReference type="STRING" id="10090.ENSMUSP00000003521"/>
<dbReference type="GlyGen" id="P62281">
    <property type="glycosylation" value="1 site, 1 O-linked glycan (1 site)"/>
</dbReference>
<dbReference type="iPTMnet" id="P62281"/>
<dbReference type="PhosphoSitePlus" id="P62281"/>
<dbReference type="SwissPalm" id="P62281"/>
<dbReference type="jPOST" id="P62281"/>
<dbReference type="PaxDb" id="10090-ENSMUSP00000003521"/>
<dbReference type="PeptideAtlas" id="P62281"/>
<dbReference type="ProteomicsDB" id="262710"/>
<dbReference type="Pumba" id="P62281"/>
<dbReference type="Antibodypedia" id="32033">
    <property type="antibodies" value="208 antibodies from 26 providers"/>
</dbReference>
<dbReference type="DNASU" id="27207"/>
<dbReference type="Ensembl" id="ENSMUST00000003521.10">
    <property type="protein sequence ID" value="ENSMUSP00000003521.9"/>
    <property type="gene ID" value="ENSMUSG00000003429.12"/>
</dbReference>
<dbReference type="GeneID" id="27207"/>
<dbReference type="KEGG" id="mmu:27207"/>
<dbReference type="UCSC" id="uc009gth.2">
    <property type="organism name" value="mouse"/>
</dbReference>
<dbReference type="AGR" id="MGI:1351329"/>
<dbReference type="CTD" id="6205"/>
<dbReference type="MGI" id="MGI:1351329">
    <property type="gene designation" value="Rps11"/>
</dbReference>
<dbReference type="VEuPathDB" id="HostDB:ENSMUSG00000003429"/>
<dbReference type="eggNOG" id="KOG1728">
    <property type="taxonomic scope" value="Eukaryota"/>
</dbReference>
<dbReference type="GeneTree" id="ENSGT00390000002732"/>
<dbReference type="HOGENOM" id="CLU_073626_0_2_1"/>
<dbReference type="InParanoid" id="P62281"/>
<dbReference type="OMA" id="DYEKCPF"/>
<dbReference type="OrthoDB" id="10254436at2759"/>
<dbReference type="PhylomeDB" id="P62281"/>
<dbReference type="TreeFam" id="TF300126"/>
<dbReference type="Reactome" id="R-MMU-156827">
    <property type="pathway name" value="L13a-mediated translational silencing of Ceruloplasmin expression"/>
</dbReference>
<dbReference type="Reactome" id="R-MMU-1799339">
    <property type="pathway name" value="SRP-dependent cotranslational protein targeting to membrane"/>
</dbReference>
<dbReference type="Reactome" id="R-MMU-6791226">
    <property type="pathway name" value="Major pathway of rRNA processing in the nucleolus and cytosol"/>
</dbReference>
<dbReference type="Reactome" id="R-MMU-72649">
    <property type="pathway name" value="Translation initiation complex formation"/>
</dbReference>
<dbReference type="Reactome" id="R-MMU-72689">
    <property type="pathway name" value="Formation of a pool of free 40S subunits"/>
</dbReference>
<dbReference type="Reactome" id="R-MMU-72695">
    <property type="pathway name" value="Formation of the ternary complex, and subsequently, the 43S complex"/>
</dbReference>
<dbReference type="Reactome" id="R-MMU-72702">
    <property type="pathway name" value="Ribosomal scanning and start codon recognition"/>
</dbReference>
<dbReference type="Reactome" id="R-MMU-72706">
    <property type="pathway name" value="GTP hydrolysis and joining of the 60S ribosomal subunit"/>
</dbReference>
<dbReference type="Reactome" id="R-MMU-975956">
    <property type="pathway name" value="Nonsense Mediated Decay (NMD) independent of the Exon Junction Complex (EJC)"/>
</dbReference>
<dbReference type="Reactome" id="R-MMU-975957">
    <property type="pathway name" value="Nonsense Mediated Decay (NMD) enhanced by the Exon Junction Complex (EJC)"/>
</dbReference>
<dbReference type="BioGRID-ORCS" id="27207">
    <property type="hits" value="31 hits in 69 CRISPR screens"/>
</dbReference>
<dbReference type="CD-CODE" id="CE726F99">
    <property type="entry name" value="Postsynaptic density"/>
</dbReference>
<dbReference type="ChiTaRS" id="Rps11">
    <property type="organism name" value="mouse"/>
</dbReference>
<dbReference type="PRO" id="PR:P62281"/>
<dbReference type="Proteomes" id="UP000000589">
    <property type="component" value="Chromosome 7"/>
</dbReference>
<dbReference type="RNAct" id="P62281">
    <property type="molecule type" value="protein"/>
</dbReference>
<dbReference type="Bgee" id="ENSMUSG00000003429">
    <property type="expression patterns" value="Expressed in epiblast (generic) and 72 other cell types or tissues"/>
</dbReference>
<dbReference type="ExpressionAtlas" id="P62281">
    <property type="expression patterns" value="baseline and differential"/>
</dbReference>
<dbReference type="GO" id="GO:0005737">
    <property type="term" value="C:cytoplasm"/>
    <property type="evidence" value="ECO:0000303"/>
    <property type="project" value="ComplexPortal"/>
</dbReference>
<dbReference type="GO" id="GO:0005829">
    <property type="term" value="C:cytosol"/>
    <property type="evidence" value="ECO:0000304"/>
    <property type="project" value="Reactome"/>
</dbReference>
<dbReference type="GO" id="GO:0022627">
    <property type="term" value="C:cytosolic small ribosomal subunit"/>
    <property type="evidence" value="ECO:0000314"/>
    <property type="project" value="UniProtKB"/>
</dbReference>
<dbReference type="GO" id="GO:0005730">
    <property type="term" value="C:nucleolus"/>
    <property type="evidence" value="ECO:0007669"/>
    <property type="project" value="UniProtKB-SubCell"/>
</dbReference>
<dbReference type="GO" id="GO:0098794">
    <property type="term" value="C:postsynapse"/>
    <property type="evidence" value="ECO:0000303"/>
    <property type="project" value="SynGO"/>
</dbReference>
<dbReference type="GO" id="GO:0098793">
    <property type="term" value="C:presynapse"/>
    <property type="evidence" value="ECO:0000303"/>
    <property type="project" value="SynGO"/>
</dbReference>
<dbReference type="GO" id="GO:0005840">
    <property type="term" value="C:ribosome"/>
    <property type="evidence" value="ECO:0000303"/>
    <property type="project" value="SynGO"/>
</dbReference>
<dbReference type="GO" id="GO:0032040">
    <property type="term" value="C:small-subunit processome"/>
    <property type="evidence" value="ECO:0000250"/>
    <property type="project" value="UniProtKB"/>
</dbReference>
<dbReference type="GO" id="GO:0045202">
    <property type="term" value="C:synapse"/>
    <property type="evidence" value="ECO:0000314"/>
    <property type="project" value="SynGO"/>
</dbReference>
<dbReference type="GO" id="GO:0019843">
    <property type="term" value="F:rRNA binding"/>
    <property type="evidence" value="ECO:0007669"/>
    <property type="project" value="UniProtKB-KW"/>
</dbReference>
<dbReference type="GO" id="GO:0003735">
    <property type="term" value="F:structural constituent of ribosome"/>
    <property type="evidence" value="ECO:0000314"/>
    <property type="project" value="UniProtKB"/>
</dbReference>
<dbReference type="GO" id="GO:0002181">
    <property type="term" value="P:cytoplasmic translation"/>
    <property type="evidence" value="ECO:0000303"/>
    <property type="project" value="ComplexPortal"/>
</dbReference>
<dbReference type="GO" id="GO:0042274">
    <property type="term" value="P:ribosomal small subunit biogenesis"/>
    <property type="evidence" value="ECO:0000250"/>
    <property type="project" value="UniProtKB"/>
</dbReference>
<dbReference type="GO" id="GO:0140242">
    <property type="term" value="P:translation at postsynapse"/>
    <property type="evidence" value="ECO:0000303"/>
    <property type="project" value="SynGO"/>
</dbReference>
<dbReference type="GO" id="GO:0140236">
    <property type="term" value="P:translation at presynapse"/>
    <property type="evidence" value="ECO:0000303"/>
    <property type="project" value="SynGO"/>
</dbReference>
<dbReference type="CDD" id="cd00364">
    <property type="entry name" value="Ribosomal_uS17"/>
    <property type="match status" value="1"/>
</dbReference>
<dbReference type="FunFam" id="2.40.50.1000:FF:000008">
    <property type="entry name" value="40S ribosomal protein S11"/>
    <property type="match status" value="1"/>
</dbReference>
<dbReference type="Gene3D" id="2.40.50.1000">
    <property type="match status" value="1"/>
</dbReference>
<dbReference type="InterPro" id="IPR012340">
    <property type="entry name" value="NA-bd_OB-fold"/>
</dbReference>
<dbReference type="InterPro" id="IPR000266">
    <property type="entry name" value="Ribosomal_uS17"/>
</dbReference>
<dbReference type="InterPro" id="IPR028333">
    <property type="entry name" value="Ribosomal_uS17_arc/euk"/>
</dbReference>
<dbReference type="InterPro" id="IPR019979">
    <property type="entry name" value="Ribosomal_uS17_CS"/>
</dbReference>
<dbReference type="InterPro" id="IPR032440">
    <property type="entry name" value="Ribosomal_uS17_N"/>
</dbReference>
<dbReference type="NCBIfam" id="NF006345">
    <property type="entry name" value="PRK08572.1"/>
    <property type="match status" value="1"/>
</dbReference>
<dbReference type="NCBIfam" id="TIGR03630">
    <property type="entry name" value="uS17_arch"/>
    <property type="match status" value="1"/>
</dbReference>
<dbReference type="PANTHER" id="PTHR10744">
    <property type="entry name" value="40S RIBOSOMAL PROTEIN S11 FAMILY MEMBER"/>
    <property type="match status" value="1"/>
</dbReference>
<dbReference type="PANTHER" id="PTHR10744:SF52">
    <property type="entry name" value="SMALL RIBOSOMAL SUBUNIT PROTEIN US17"/>
    <property type="match status" value="1"/>
</dbReference>
<dbReference type="Pfam" id="PF00366">
    <property type="entry name" value="Ribosomal_S17"/>
    <property type="match status" value="1"/>
</dbReference>
<dbReference type="Pfam" id="PF16205">
    <property type="entry name" value="Ribosomal_S17_N"/>
    <property type="match status" value="1"/>
</dbReference>
<dbReference type="PRINTS" id="PR00973">
    <property type="entry name" value="RIBOSOMALS17"/>
</dbReference>
<dbReference type="SUPFAM" id="SSF50249">
    <property type="entry name" value="Nucleic acid-binding proteins"/>
    <property type="match status" value="1"/>
</dbReference>
<dbReference type="PROSITE" id="PS00056">
    <property type="entry name" value="RIBOSOMAL_S17"/>
    <property type="match status" value="1"/>
</dbReference>
<feature type="initiator methionine" description="Removed" evidence="1">
    <location>
        <position position="1"/>
    </location>
</feature>
<feature type="chain" id="PRO_0000128511" description="Small ribosomal subunit protein uS17">
    <location>
        <begin position="2"/>
        <end position="158"/>
    </location>
</feature>
<feature type="modified residue" description="N-acetylalanine" evidence="1">
    <location>
        <position position="2"/>
    </location>
</feature>
<feature type="modified residue" description="Citrulline" evidence="2">
    <location>
        <position position="22"/>
    </location>
</feature>
<feature type="modified residue" description="N6-acetyllysine" evidence="7">
    <location>
        <position position="38"/>
    </location>
</feature>
<feature type="modified residue" description="N6-acetyllysine" evidence="7">
    <location>
        <position position="45"/>
    </location>
</feature>
<feature type="modified residue" description="N6-acetyllysine" evidence="7">
    <location>
        <position position="58"/>
    </location>
</feature>
<feature type="modified residue" description="Phosphoserine" evidence="1">
    <location>
        <position position="67"/>
    </location>
</feature>
<feature type="modified residue" description="Omega-N-methylarginine" evidence="8">
    <location>
        <position position="69"/>
    </location>
</feature>
<feature type="modified residue" description="Phosphoserine" evidence="1">
    <location>
        <position position="110"/>
    </location>
</feature>
<feature type="lipid moiety-binding region" description="S-palmitoyl cysteine" evidence="1">
    <location>
        <position position="60"/>
    </location>
</feature>
<evidence type="ECO:0000250" key="1">
    <source>
        <dbReference type="UniProtKB" id="P62280"/>
    </source>
</evidence>
<evidence type="ECO:0000269" key="2">
    <source>
    </source>
</evidence>
<evidence type="ECO:0000269" key="3">
    <source>
    </source>
</evidence>
<evidence type="ECO:0000305" key="4"/>
<evidence type="ECO:0007744" key="5">
    <source>
        <dbReference type="PDB" id="7CPU"/>
    </source>
</evidence>
<evidence type="ECO:0007744" key="6">
    <source>
        <dbReference type="PDB" id="7CPV"/>
    </source>
</evidence>
<evidence type="ECO:0007744" key="7">
    <source>
    </source>
</evidence>
<evidence type="ECO:0007744" key="8">
    <source>
    </source>
</evidence>
<keyword id="KW-0002">3D-structure</keyword>
<keyword id="KW-0007">Acetylation</keyword>
<keyword id="KW-0164">Citrullination</keyword>
<keyword id="KW-0963">Cytoplasm</keyword>
<keyword id="KW-0449">Lipoprotein</keyword>
<keyword id="KW-0488">Methylation</keyword>
<keyword id="KW-0539">Nucleus</keyword>
<keyword id="KW-0564">Palmitate</keyword>
<keyword id="KW-0597">Phosphoprotein</keyword>
<keyword id="KW-1185">Reference proteome</keyword>
<keyword id="KW-0687">Ribonucleoprotein</keyword>
<keyword id="KW-0689">Ribosomal protein</keyword>
<keyword id="KW-0694">RNA-binding</keyword>
<keyword id="KW-0699">rRNA-binding</keyword>
<sequence length="158" mass="18431">MADIQTERAYQKQPTIFQNKKRVLLGETGKEKLPRYYKNIGLGFKTPKEAIEGTYIDKKCPFTGNVSIRGRILSGVVTKMKMQRTIVIRRDYLHYIRKYNRFEKRHKNMSVHLSPCFRDVQIGDIVTVGECRPLSKTVRFNVLKVTKAAGTKKQFQKF</sequence>
<reference key="1">
    <citation type="submission" date="1997-04" db="EMBL/GenBank/DDBJ databases">
        <authorList>
            <person name="Rocha D."/>
            <person name="Anderson E."/>
            <person name="Botcherby M."/>
            <person name="Jordan B."/>
        </authorList>
    </citation>
    <scope>NUCLEOTIDE SEQUENCE [MRNA]</scope>
    <source>
        <strain>C57BL/6J</strain>
    </source>
</reference>
<reference key="2">
    <citation type="journal article" date="1999" name="Gene">
        <title>Gene organization and sequence of the region containing the ribosomal protein genes RPL13A and RPS11 in the human genome and conserved features in the mouse genome.</title>
        <authorList>
            <person name="Higa S."/>
            <person name="Yoshihama M."/>
            <person name="Tanaka T."/>
            <person name="Kenmochi N."/>
        </authorList>
    </citation>
    <scope>NUCLEOTIDE SEQUENCE [GENOMIC DNA]</scope>
</reference>
<reference key="3">
    <citation type="journal article" date="2004" name="Genome Res.">
        <title>The status, quality, and expansion of the NIH full-length cDNA project: the Mammalian Gene Collection (MGC).</title>
        <authorList>
            <consortium name="The MGC Project Team"/>
        </authorList>
    </citation>
    <scope>NUCLEOTIDE SEQUENCE [LARGE SCALE MRNA]</scope>
</reference>
<reference key="4">
    <citation type="journal article" date="2010" name="Cell">
        <title>A tissue-specific atlas of mouse protein phosphorylation and expression.</title>
        <authorList>
            <person name="Huttlin E.L."/>
            <person name="Jedrychowski M.P."/>
            <person name="Elias J.E."/>
            <person name="Goswami T."/>
            <person name="Rad R."/>
            <person name="Beausoleil S.A."/>
            <person name="Villen J."/>
            <person name="Haas W."/>
            <person name="Sowa M.E."/>
            <person name="Gygi S.P."/>
        </authorList>
    </citation>
    <scope>IDENTIFICATION BY MASS SPECTROMETRY [LARGE SCALE ANALYSIS]</scope>
    <source>
        <tissue>Brain</tissue>
        <tissue>Brown adipose tissue</tissue>
        <tissue>Heart</tissue>
        <tissue>Kidney</tissue>
        <tissue>Liver</tissue>
        <tissue>Lung</tissue>
        <tissue>Pancreas</tissue>
        <tissue>Spleen</tissue>
        <tissue>Testis</tissue>
    </source>
</reference>
<reference key="5">
    <citation type="journal article" date="2013" name="Mol. Cell">
        <title>SIRT5-mediated lysine desuccinylation impacts diverse metabolic pathways.</title>
        <authorList>
            <person name="Park J."/>
            <person name="Chen Y."/>
            <person name="Tishkoff D.X."/>
            <person name="Peng C."/>
            <person name="Tan M."/>
            <person name="Dai L."/>
            <person name="Xie Z."/>
            <person name="Zhang Y."/>
            <person name="Zwaans B.M."/>
            <person name="Skinner M.E."/>
            <person name="Lombard D.B."/>
            <person name="Zhao Y."/>
        </authorList>
    </citation>
    <scope>ACETYLATION [LARGE SCALE ANALYSIS] AT LYS-38; LYS-45 AND LYS-58</scope>
    <scope>IDENTIFICATION BY MASS SPECTROMETRY [LARGE SCALE ANALYSIS]</scope>
    <source>
        <tissue>Embryonic fibroblast</tissue>
    </source>
</reference>
<reference key="6">
    <citation type="journal article" date="2014" name="Mol. Cell. Proteomics">
        <title>Immunoaffinity enrichment and mass spectrometry analysis of protein methylation.</title>
        <authorList>
            <person name="Guo A."/>
            <person name="Gu H."/>
            <person name="Zhou J."/>
            <person name="Mulhern D."/>
            <person name="Wang Y."/>
            <person name="Lee K.A."/>
            <person name="Yang V."/>
            <person name="Aguiar M."/>
            <person name="Kornhauser J."/>
            <person name="Jia X."/>
            <person name="Ren J."/>
            <person name="Beausoleil S.A."/>
            <person name="Silva J.C."/>
            <person name="Vemulapalli V."/>
            <person name="Bedford M.T."/>
            <person name="Comb M.J."/>
        </authorList>
    </citation>
    <scope>METHYLATION [LARGE SCALE ANALYSIS] AT ARG-69</scope>
    <scope>IDENTIFICATION BY MASS SPECTROMETRY [LARGE SCALE ANALYSIS]</scope>
    <source>
        <tissue>Embryo</tissue>
    </source>
</reference>
<reference key="7">
    <citation type="journal article" date="2014" name="Nature">
        <title>Citrullination regulates pluripotency and histone H1 binding to chromatin.</title>
        <authorList>
            <person name="Christophorou M.A."/>
            <person name="Castelo-Branco G."/>
            <person name="Halley-Stott R.P."/>
            <person name="Oliveira C.S."/>
            <person name="Loos R."/>
            <person name="Radzisheuskaya A."/>
            <person name="Mowen K.A."/>
            <person name="Bertone P."/>
            <person name="Silva J.C."/>
            <person name="Zernicka-Goetz M."/>
            <person name="Nielsen M.L."/>
            <person name="Gurdon J.B."/>
            <person name="Kouzarides T."/>
        </authorList>
    </citation>
    <scope>CITRULLINATION AT ARG-22</scope>
</reference>
<reference evidence="5 6" key="8">
    <citation type="journal article" date="2022" name="Nature">
        <title>A male germ-cell-specific ribosome controls male fertility.</title>
        <authorList>
            <person name="Li H."/>
            <person name="Huo Y."/>
            <person name="He X."/>
            <person name="Yao L."/>
            <person name="Zhang H."/>
            <person name="Cui Y."/>
            <person name="Xiao H."/>
            <person name="Xie W."/>
            <person name="Zhang D."/>
            <person name="Wang Y."/>
            <person name="Zhang S."/>
            <person name="Tu H."/>
            <person name="Cheng Y."/>
            <person name="Guo Y."/>
            <person name="Cao X."/>
            <person name="Zhu Y."/>
            <person name="Jiang T."/>
            <person name="Guo X."/>
            <person name="Qin Y."/>
            <person name="Sha J."/>
        </authorList>
    </citation>
    <scope>STRUCTURE BY ELECTRON MICROSCOPY (3.03 ANGSTROMS) OF RIBOSOME</scope>
    <scope>FUNCTION</scope>
    <scope>SUBUNIT</scope>
    <scope>SUBCELLULAR LOCATION</scope>
</reference>
<accession>P62281</accession>
<accession>P04643</accession>